<name>TPS10_DICPU</name>
<sequence length="356" mass="41949">MEAIKQKRSLISLKESFIYPHEWNHEPCDNKFILECFKESVNLGIFQIDDKKSFSYINSCLSSCAYMWPLCNHSQSLMTGRFIQWSFLIDDYLDSLEIDDKKTDSTVLNVEKALINGTITNKNSKLEEYTVFFRNKLFEYCGRERLDAFNLLINELVICLWTLVPFSKIHSKEKDFYPSYQLYRCIRTINVGIIACCALNFILFKDLDVKLWLNPRFRKILNRASIQISIVNDAVSYAKEILNENAYCNTFYFLQKDSTKFSTFDQVCEYLFNEANTYIKDIITDEPLLLHEFEDVEDRKVVQSLLNHVHYLISGNFVWSIENNQRYQSNIYFINLLQSTGKSIGSSWSNIKTFFR</sequence>
<evidence type="ECO:0000250" key="1">
    <source>
        <dbReference type="UniProtKB" id="Q54BE5"/>
    </source>
</evidence>
<evidence type="ECO:0000250" key="2">
    <source>
        <dbReference type="UniProtKB" id="Q55E23"/>
    </source>
</evidence>
<evidence type="ECO:0000269" key="3">
    <source>
    </source>
</evidence>
<evidence type="ECO:0000269" key="4">
    <source>
    </source>
</evidence>
<evidence type="ECO:0000303" key="5">
    <source>
    </source>
</evidence>
<evidence type="ECO:0000305" key="6"/>
<comment type="function">
    <text evidence="3 4">Terpene synthase that converts its substrate farnesyl diphosphate (FPP) into several unidentified sesquiterpenes (PubMed:30254228). TPS10 also converts geranylgeranyl diphosphate (GGPP) into the diterpene beta-araneosene (PubMed:31621716).</text>
</comment>
<comment type="catalytic activity">
    <reaction evidence="4">
        <text>geranylgeranyl diphosphate = beta-araneosene + diphosphate</text>
        <dbReference type="Rhea" id="RHEA:73991"/>
        <dbReference type="ChEBI" id="CHEBI:33019"/>
        <dbReference type="ChEBI" id="CHEBI:57533"/>
        <dbReference type="ChEBI" id="CHEBI:193074"/>
    </reaction>
    <physiologicalReaction direction="left-to-right" evidence="4">
        <dbReference type="Rhea" id="RHEA:73992"/>
    </physiologicalReaction>
</comment>
<comment type="domain">
    <text evidence="2">Contains several highly conserved motifs that are important for catalytic activity including the aspartate-rich 'DDxx(x)D/E' motif and the 'NDxxSxxxD/E' motif, both of which are involved in complexing metal ions to coordinate the binding of the isoprenyl diphosphate substrate in the active site.</text>
</comment>
<comment type="similarity">
    <text evidence="6">Belongs to the terpene synthase family.</text>
</comment>
<comment type="sequence caution" evidence="6">
    <conflict type="erroneous gene model prediction">
        <sequence resource="EMBL-CDS" id="EGC34004"/>
    </conflict>
</comment>
<organism>
    <name type="scientific">Dictyostelium purpureum</name>
    <name type="common">Slime mold</name>
    <dbReference type="NCBI Taxonomy" id="5786"/>
    <lineage>
        <taxon>Eukaryota</taxon>
        <taxon>Amoebozoa</taxon>
        <taxon>Evosea</taxon>
        <taxon>Eumycetozoa</taxon>
        <taxon>Dictyostelia</taxon>
        <taxon>Dictyosteliales</taxon>
        <taxon>Dictyosteliaceae</taxon>
        <taxon>Dictyostelium</taxon>
    </lineage>
</organism>
<protein>
    <recommendedName>
        <fullName evidence="5">Terpene synthase 10</fullName>
        <ecNumber evidence="3">4.2.3.-</ecNumber>
    </recommendedName>
</protein>
<gene>
    <name evidence="5" type="primary">TPS10</name>
    <name type="ORF">DICPUDRAFT_153883</name>
</gene>
<accession>A0A385AJM5</accession>
<accession>F0ZPZ6</accession>
<proteinExistence type="evidence at protein level"/>
<keyword id="KW-0456">Lyase</keyword>
<keyword id="KW-0479">Metal-binding</keyword>
<keyword id="KW-1185">Reference proteome</keyword>
<dbReference type="EC" id="4.2.3.-" evidence="3"/>
<dbReference type="EMBL" id="MG262471">
    <property type="protein sequence ID" value="AXN72979.1"/>
    <property type="molecule type" value="mRNA"/>
</dbReference>
<dbReference type="EMBL" id="GL871117">
    <property type="protein sequence ID" value="EGC34004.1"/>
    <property type="status" value="ALT_SEQ"/>
    <property type="molecule type" value="Genomic_DNA"/>
</dbReference>
<dbReference type="RefSeq" id="XP_003289490.1">
    <property type="nucleotide sequence ID" value="XM_003289442.1"/>
</dbReference>
<dbReference type="SMR" id="A0A385AJM5"/>
<dbReference type="EnsemblProtists" id="EGC34004">
    <property type="protein sequence ID" value="EGC34004"/>
    <property type="gene ID" value="DICPUDRAFT_153883"/>
</dbReference>
<dbReference type="GeneID" id="10502603"/>
<dbReference type="KEGG" id="dpp:DICPUDRAFT_153883"/>
<dbReference type="VEuPathDB" id="AmoebaDB:DICPUDRAFT_153883"/>
<dbReference type="eggNOG" id="ENOG502RI47">
    <property type="taxonomic scope" value="Eukaryota"/>
</dbReference>
<dbReference type="Proteomes" id="UP000001064">
    <property type="component" value="Unassembled WGS sequence"/>
</dbReference>
<dbReference type="GO" id="GO:0046872">
    <property type="term" value="F:metal ion binding"/>
    <property type="evidence" value="ECO:0007669"/>
    <property type="project" value="UniProtKB-KW"/>
</dbReference>
<dbReference type="GO" id="GO:0010333">
    <property type="term" value="F:terpene synthase activity"/>
    <property type="evidence" value="ECO:0000318"/>
    <property type="project" value="GO_Central"/>
</dbReference>
<dbReference type="GO" id="GO:0046246">
    <property type="term" value="P:terpene biosynthetic process"/>
    <property type="evidence" value="ECO:0007669"/>
    <property type="project" value="UniProtKB-ARBA"/>
</dbReference>
<dbReference type="Gene3D" id="1.10.600.10">
    <property type="entry name" value="Farnesyl Diphosphate Synthase"/>
    <property type="match status" value="1"/>
</dbReference>
<dbReference type="InterPro" id="IPR008949">
    <property type="entry name" value="Isoprenoid_synthase_dom_sf"/>
</dbReference>
<dbReference type="InterPro" id="IPR034686">
    <property type="entry name" value="Terpene_cyclase-like_2"/>
</dbReference>
<dbReference type="PANTHER" id="PTHR35201">
    <property type="entry name" value="TERPENE SYNTHASE"/>
    <property type="match status" value="1"/>
</dbReference>
<dbReference type="PANTHER" id="PTHR35201:SF2">
    <property type="entry name" value="TERPENE SYNTHASE 1-RELATED"/>
    <property type="match status" value="1"/>
</dbReference>
<dbReference type="Pfam" id="PF19086">
    <property type="entry name" value="Terpene_syn_C_2"/>
    <property type="match status" value="1"/>
</dbReference>
<dbReference type="SUPFAM" id="SSF48576">
    <property type="entry name" value="Terpenoid synthases"/>
    <property type="match status" value="1"/>
</dbReference>
<feature type="chain" id="PRO_0000457027" description="Terpene synthase 10">
    <location>
        <begin position="1"/>
        <end position="356"/>
    </location>
</feature>
<feature type="short sequence motif" description="DDxx(x)D/E motif" evidence="1">
    <location>
        <begin position="90"/>
        <end position="95"/>
    </location>
</feature>
<feature type="short sequence motif" description="NDxxSxxxD/E motif" evidence="1">
    <location>
        <begin position="232"/>
        <end position="240"/>
    </location>
</feature>
<reference key="1">
    <citation type="journal article" date="2018" name="Sci. Rep.">
        <title>Diversity and Functional Evolution of Terpene Synthases in Dictyostelid Social Amoebae.</title>
        <authorList>
            <person name="Chen X."/>
            <person name="Kollner T.G."/>
            <person name="Shaulsky G."/>
            <person name="Jia Q."/>
            <person name="Dickschat J.S."/>
            <person name="Gershenzon J."/>
            <person name="Chen F."/>
        </authorList>
    </citation>
    <scope>NUCLEOTIDE SEQUENCE [MRNA]</scope>
    <scope>FUNCTION</scope>
    <scope>CATALYTIC ACTIVITY</scope>
    <source>
        <strain>AX1</strain>
    </source>
</reference>
<reference key="2">
    <citation type="journal article" date="2011" name="Genome Biol.">
        <title>Comparative genomics of the social amoebae Dictyostelium discoideum and Dictyostelium purpureum.</title>
        <authorList>
            <consortium name="US DOE Joint Genome Institute (JGI-PGF)"/>
            <person name="Sucgang R."/>
            <person name="Kuo A."/>
            <person name="Tian X."/>
            <person name="Salerno W."/>
            <person name="Parikh A."/>
            <person name="Feasley C.L."/>
            <person name="Dalin E."/>
            <person name="Tu H."/>
            <person name="Huang E."/>
            <person name="Barry K."/>
            <person name="Lindquist E."/>
            <person name="Shapiro H."/>
            <person name="Bruce D."/>
            <person name="Schmutz J."/>
            <person name="Salamov A."/>
            <person name="Fey P."/>
            <person name="Gaudet P."/>
            <person name="Anjard C."/>
            <person name="Babu M.M."/>
            <person name="Basu S."/>
            <person name="Bushmanova Y."/>
            <person name="van der Wel H."/>
            <person name="Katoh-Kurasawa M."/>
            <person name="Dinh C."/>
            <person name="Coutinho P.M."/>
            <person name="Saito T."/>
            <person name="Elias M."/>
            <person name="Schaap P."/>
            <person name="Kay R.R."/>
            <person name="Henrissat B."/>
            <person name="Eichinger L."/>
            <person name="Rivero F."/>
            <person name="Putnam N.H."/>
            <person name="West C.M."/>
            <person name="Loomis W.F."/>
            <person name="Chisholm R.L."/>
            <person name="Shaulsky G."/>
            <person name="Strassmann J.E."/>
            <person name="Queller D.C."/>
            <person name="Kuspa A."/>
            <person name="Grigoriev I.V."/>
        </authorList>
    </citation>
    <scope>NUCLEOTIDE SEQUENCE [LARGE SCALE GENOMIC DNA]</scope>
    <source>
        <strain>QSDP1</strain>
    </source>
</reference>
<reference key="3">
    <citation type="journal article" date="2019" name="Chem. Commun. (Camb.)">
        <title>Characterisation of three terpene synthases for beta-barbatene, beta-araneosene and nephthenol from social amoebae.</title>
        <authorList>
            <person name="Rinkel J."/>
            <person name="Koellner T.G."/>
            <person name="Chen F."/>
            <person name="Dickschat J.S."/>
        </authorList>
    </citation>
    <scope>FUNCTION</scope>
    <scope>CATALYTIC ACTIVITY</scope>
</reference>